<dbReference type="EC" id="3.4.11.4" evidence="1"/>
<dbReference type="EMBL" id="AE008691">
    <property type="protein sequence ID" value="AAM25000.1"/>
    <property type="molecule type" value="Genomic_DNA"/>
</dbReference>
<dbReference type="RefSeq" id="WP_011025997.1">
    <property type="nucleotide sequence ID" value="NC_003869.1"/>
</dbReference>
<dbReference type="SMR" id="Q8R922"/>
<dbReference type="STRING" id="273068.TTE1808"/>
<dbReference type="MEROPS" id="M20.003"/>
<dbReference type="KEGG" id="tte:TTE1808"/>
<dbReference type="eggNOG" id="COG2195">
    <property type="taxonomic scope" value="Bacteria"/>
</dbReference>
<dbReference type="HOGENOM" id="CLU_053676_0_0_9"/>
<dbReference type="OrthoDB" id="9804934at2"/>
<dbReference type="Proteomes" id="UP000000555">
    <property type="component" value="Chromosome"/>
</dbReference>
<dbReference type="GO" id="GO:0005829">
    <property type="term" value="C:cytosol"/>
    <property type="evidence" value="ECO:0007669"/>
    <property type="project" value="TreeGrafter"/>
</dbReference>
<dbReference type="GO" id="GO:0008237">
    <property type="term" value="F:metallopeptidase activity"/>
    <property type="evidence" value="ECO:0007669"/>
    <property type="project" value="UniProtKB-KW"/>
</dbReference>
<dbReference type="GO" id="GO:0045148">
    <property type="term" value="F:tripeptide aminopeptidase activity"/>
    <property type="evidence" value="ECO:0007669"/>
    <property type="project" value="UniProtKB-UniRule"/>
</dbReference>
<dbReference type="GO" id="GO:0008270">
    <property type="term" value="F:zinc ion binding"/>
    <property type="evidence" value="ECO:0007669"/>
    <property type="project" value="UniProtKB-UniRule"/>
</dbReference>
<dbReference type="GO" id="GO:0043171">
    <property type="term" value="P:peptide catabolic process"/>
    <property type="evidence" value="ECO:0007669"/>
    <property type="project" value="UniProtKB-UniRule"/>
</dbReference>
<dbReference type="GO" id="GO:0006508">
    <property type="term" value="P:proteolysis"/>
    <property type="evidence" value="ECO:0007669"/>
    <property type="project" value="UniProtKB-UniRule"/>
</dbReference>
<dbReference type="CDD" id="cd03892">
    <property type="entry name" value="M20_peptT"/>
    <property type="match status" value="1"/>
</dbReference>
<dbReference type="FunFam" id="3.30.70.360:FF:000002">
    <property type="entry name" value="Peptidase T"/>
    <property type="match status" value="1"/>
</dbReference>
<dbReference type="Gene3D" id="3.30.70.360">
    <property type="match status" value="1"/>
</dbReference>
<dbReference type="Gene3D" id="3.40.630.10">
    <property type="entry name" value="Zn peptidases"/>
    <property type="match status" value="1"/>
</dbReference>
<dbReference type="HAMAP" id="MF_00550">
    <property type="entry name" value="Aminopeptidase_M20"/>
    <property type="match status" value="1"/>
</dbReference>
<dbReference type="InterPro" id="IPR001261">
    <property type="entry name" value="ArgE/DapE_CS"/>
</dbReference>
<dbReference type="InterPro" id="IPR036264">
    <property type="entry name" value="Bact_exopeptidase_dim_dom"/>
</dbReference>
<dbReference type="InterPro" id="IPR002933">
    <property type="entry name" value="Peptidase_M20"/>
</dbReference>
<dbReference type="InterPro" id="IPR011650">
    <property type="entry name" value="Peptidase_M20_dimer"/>
</dbReference>
<dbReference type="InterPro" id="IPR010161">
    <property type="entry name" value="Peptidase_M20B"/>
</dbReference>
<dbReference type="NCBIfam" id="TIGR01882">
    <property type="entry name" value="peptidase-T"/>
    <property type="match status" value="1"/>
</dbReference>
<dbReference type="NCBIfam" id="NF003976">
    <property type="entry name" value="PRK05469.1"/>
    <property type="match status" value="1"/>
</dbReference>
<dbReference type="NCBIfam" id="NF009920">
    <property type="entry name" value="PRK13381.1"/>
    <property type="match status" value="1"/>
</dbReference>
<dbReference type="PANTHER" id="PTHR42994">
    <property type="entry name" value="PEPTIDASE T"/>
    <property type="match status" value="1"/>
</dbReference>
<dbReference type="PANTHER" id="PTHR42994:SF1">
    <property type="entry name" value="PEPTIDASE T"/>
    <property type="match status" value="1"/>
</dbReference>
<dbReference type="Pfam" id="PF07687">
    <property type="entry name" value="M20_dimer"/>
    <property type="match status" value="1"/>
</dbReference>
<dbReference type="Pfam" id="PF01546">
    <property type="entry name" value="Peptidase_M20"/>
    <property type="match status" value="1"/>
</dbReference>
<dbReference type="PIRSF" id="PIRSF037215">
    <property type="entry name" value="Peptidase_M20B"/>
    <property type="match status" value="1"/>
</dbReference>
<dbReference type="SUPFAM" id="SSF55031">
    <property type="entry name" value="Bacterial exopeptidase dimerisation domain"/>
    <property type="match status" value="1"/>
</dbReference>
<dbReference type="SUPFAM" id="SSF53187">
    <property type="entry name" value="Zn-dependent exopeptidases"/>
    <property type="match status" value="1"/>
</dbReference>
<dbReference type="PROSITE" id="PS00758">
    <property type="entry name" value="ARGE_DAPE_CPG2_1"/>
    <property type="match status" value="1"/>
</dbReference>
<dbReference type="PROSITE" id="PS00759">
    <property type="entry name" value="ARGE_DAPE_CPG2_2"/>
    <property type="match status" value="1"/>
</dbReference>
<keyword id="KW-0031">Aminopeptidase</keyword>
<keyword id="KW-0963">Cytoplasm</keyword>
<keyword id="KW-0378">Hydrolase</keyword>
<keyword id="KW-0479">Metal-binding</keyword>
<keyword id="KW-0482">Metalloprotease</keyword>
<keyword id="KW-0645">Protease</keyword>
<keyword id="KW-1185">Reference proteome</keyword>
<keyword id="KW-0862">Zinc</keyword>
<accession>Q8R922</accession>
<reference key="1">
    <citation type="journal article" date="2002" name="Genome Res.">
        <title>A complete sequence of the T. tengcongensis genome.</title>
        <authorList>
            <person name="Bao Q."/>
            <person name="Tian Y."/>
            <person name="Li W."/>
            <person name="Xu Z."/>
            <person name="Xuan Z."/>
            <person name="Hu S."/>
            <person name="Dong W."/>
            <person name="Yang J."/>
            <person name="Chen Y."/>
            <person name="Xue Y."/>
            <person name="Xu Y."/>
            <person name="Lai X."/>
            <person name="Huang L."/>
            <person name="Dong X."/>
            <person name="Ma Y."/>
            <person name="Ling L."/>
            <person name="Tan H."/>
            <person name="Chen R."/>
            <person name="Wang J."/>
            <person name="Yu J."/>
            <person name="Yang H."/>
        </authorList>
    </citation>
    <scope>NUCLEOTIDE SEQUENCE [LARGE SCALE GENOMIC DNA]</scope>
    <source>
        <strain>DSM 15242 / JCM 11007 / NBRC 100824 / MB4</strain>
    </source>
</reference>
<name>PEPT_CALS4</name>
<feature type="chain" id="PRO_0000185329" description="Peptidase T">
    <location>
        <begin position="1"/>
        <end position="409"/>
    </location>
</feature>
<feature type="active site" evidence="1">
    <location>
        <position position="80"/>
    </location>
</feature>
<feature type="active site" description="Proton acceptor" evidence="1">
    <location>
        <position position="175"/>
    </location>
</feature>
<feature type="binding site" evidence="1">
    <location>
        <position position="78"/>
    </location>
    <ligand>
        <name>Zn(2+)</name>
        <dbReference type="ChEBI" id="CHEBI:29105"/>
        <label>1</label>
    </ligand>
</feature>
<feature type="binding site" evidence="1">
    <location>
        <position position="141"/>
    </location>
    <ligand>
        <name>Zn(2+)</name>
        <dbReference type="ChEBI" id="CHEBI:29105"/>
        <label>1</label>
    </ligand>
</feature>
<feature type="binding site" evidence="1">
    <location>
        <position position="141"/>
    </location>
    <ligand>
        <name>Zn(2+)</name>
        <dbReference type="ChEBI" id="CHEBI:29105"/>
        <label>2</label>
    </ligand>
</feature>
<feature type="binding site" evidence="1">
    <location>
        <position position="176"/>
    </location>
    <ligand>
        <name>Zn(2+)</name>
        <dbReference type="ChEBI" id="CHEBI:29105"/>
        <label>2</label>
    </ligand>
</feature>
<feature type="binding site" evidence="1">
    <location>
        <position position="198"/>
    </location>
    <ligand>
        <name>Zn(2+)</name>
        <dbReference type="ChEBI" id="CHEBI:29105"/>
        <label>1</label>
    </ligand>
</feature>
<feature type="binding site" evidence="1">
    <location>
        <position position="380"/>
    </location>
    <ligand>
        <name>Zn(2+)</name>
        <dbReference type="ChEBI" id="CHEBI:29105"/>
        <label>2</label>
    </ligand>
</feature>
<sequence>MSKVVERFLKYVKYHTTSDENSNTFPSTEGQLIFARELAKELKELGLSEVEVDENGYVTALLSANTDKKIPTIGFIAHMDTSPDMCGKDVKPQIIENYDGNDIVLNKEKGIILSTSEFPELKNYIGKTLITTDGTTLLGADDKAGIAEIITAIEYLINHPEIEHGNVKIAFTPDEEIGRGVDKFNVKKFACDFAYTVDGGELGTIEYENFNAASAKIKIHGRNVHPGTAKGKMKNSILIGIELQNMLPELERPEHTEGYQGFYHLNNFQGTVEETSMYYIIRDFDKQAFSDKKEYIKSIVEALNKKYGEGTVELELKDQYYNMREVIEKHMHIVETAMEAMRSLGIEPKVVPIRGGTDGARLSFMGLPTPNLFTGGHNFHGKYEFIPIHAMEKAVEVIVKIVELYGKKG</sequence>
<protein>
    <recommendedName>
        <fullName evidence="1">Peptidase T</fullName>
        <ecNumber evidence="1">3.4.11.4</ecNumber>
    </recommendedName>
    <alternativeName>
        <fullName evidence="1">Aminotripeptidase</fullName>
        <shortName evidence="1">Tripeptidase</shortName>
    </alternativeName>
    <alternativeName>
        <fullName evidence="1">Tripeptide aminopeptidase</fullName>
    </alternativeName>
</protein>
<evidence type="ECO:0000255" key="1">
    <source>
        <dbReference type="HAMAP-Rule" id="MF_00550"/>
    </source>
</evidence>
<comment type="function">
    <text evidence="1">Cleaves the N-terminal amino acid of tripeptides.</text>
</comment>
<comment type="catalytic activity">
    <reaction evidence="1">
        <text>Release of the N-terminal residue from a tripeptide.</text>
        <dbReference type="EC" id="3.4.11.4"/>
    </reaction>
</comment>
<comment type="cofactor">
    <cofactor evidence="1">
        <name>Zn(2+)</name>
        <dbReference type="ChEBI" id="CHEBI:29105"/>
    </cofactor>
    <text evidence="1">Binds 2 Zn(2+) ions per subunit.</text>
</comment>
<comment type="subcellular location">
    <subcellularLocation>
        <location evidence="1">Cytoplasm</location>
    </subcellularLocation>
</comment>
<comment type="similarity">
    <text evidence="1">Belongs to the peptidase M20B family.</text>
</comment>
<organism>
    <name type="scientific">Caldanaerobacter subterraneus subsp. tengcongensis (strain DSM 15242 / JCM 11007 / NBRC 100824 / MB4)</name>
    <name type="common">Thermoanaerobacter tengcongensis</name>
    <dbReference type="NCBI Taxonomy" id="273068"/>
    <lineage>
        <taxon>Bacteria</taxon>
        <taxon>Bacillati</taxon>
        <taxon>Bacillota</taxon>
        <taxon>Clostridia</taxon>
        <taxon>Thermoanaerobacterales</taxon>
        <taxon>Thermoanaerobacteraceae</taxon>
        <taxon>Caldanaerobacter</taxon>
    </lineage>
</organism>
<proteinExistence type="inferred from homology"/>
<gene>
    <name evidence="1" type="primary">pepT</name>
    <name type="synonym">pepD</name>
    <name type="ordered locus">TTE1808</name>
</gene>